<sequence>MRFLSFWRLLLYHALCLALPEVSAHTVELNEMFGQIQSPGYPDSYPSDSEVTWNITVPEGFRIKLYFMHFNLESSYLCEYDYVKVETEDQVLATFCGRETTDTEQTPGQEVVLSPGTFMSVTFRSDFSNEERFTGFDAHYMAVDVDECKEREDEELSCDHYCHNYIGGYYCSCRFGYILHTDNRTCRVECSGNLFTQRTGTITSPDYPNPYPKSSECSYTIDLEEGFMVSLQFEDIFDIEDHPEVPCPYDYIKIKAGSKVWGPFCGEKSPEPISTQTHSVQILFRSDNSGENRGWRLSYRAAGNECPKLQPPVYGKIEPSQAVYSFKDQVLVSCDTGYKVLKDNEVMDTFQIECLKDGAWSNKIPTCKIVDCGAPAGLKHGLVTFSTRNNLTTYKSEIRYSCQQPYYKMLHNTTGVYTCSAHGTWTNEVLKRSLPTCLPVCGVPKFSRKQISRIFNGRPAQKGTMPWIAMLSHLNGQPFCGGSLLGSNWVLTAAHCLHQSLDPEEPTLHSSYLLSPSDFKIIMGKHWRRRSDEDEQHLHVKRTTLHPLYNPSTFENDLGLVELSESPRLNDFVMPVCLPEQPSTEGTMVIVSGWGKQFLQRFPENLMEIEIPIVNSDTCQEAYTPLKKKVTKDMICAGEKEGGKDACAGDSGGPMVTKDAERDQWYLVGVVSWGEDCGKKDRYGVYSYIYPNKDWIQRITGVRN</sequence>
<dbReference type="EC" id="3.4.21.-"/>
<dbReference type="EMBL" id="D16492">
    <property type="protein sequence ID" value="BAA03944.1"/>
    <property type="molecule type" value="mRNA"/>
</dbReference>
<dbReference type="EMBL" id="AB049755">
    <property type="protein sequence ID" value="BAB69688.1"/>
    <property type="molecule type" value="mRNA"/>
</dbReference>
<dbReference type="EMBL" id="AY135527">
    <property type="protein sequence ID" value="AAN39850.1"/>
    <property type="molecule type" value="Genomic_DNA"/>
</dbReference>
<dbReference type="EMBL" id="AY135525">
    <property type="protein sequence ID" value="AAN39850.1"/>
    <property type="status" value="JOINED"/>
    <property type="molecule type" value="Genomic_DNA"/>
</dbReference>
<dbReference type="EMBL" id="AK031598">
    <property type="protein sequence ID" value="BAC27469.1"/>
    <property type="molecule type" value="mRNA"/>
</dbReference>
<dbReference type="EMBL" id="CH466521">
    <property type="protein sequence ID" value="EDK97670.1"/>
    <property type="molecule type" value="Genomic_DNA"/>
</dbReference>
<dbReference type="EMBL" id="CH466521">
    <property type="protein sequence ID" value="EDK97671.1"/>
    <property type="molecule type" value="Genomic_DNA"/>
</dbReference>
<dbReference type="EMBL" id="BC131637">
    <property type="protein sequence ID" value="AAI31638.1"/>
    <property type="molecule type" value="mRNA"/>
</dbReference>
<dbReference type="EMBL" id="BC131638">
    <property type="protein sequence ID" value="AAI31639.1"/>
    <property type="molecule type" value="mRNA"/>
</dbReference>
<dbReference type="CCDS" id="CCDS37303.1">
    <molecule id="P98064-1"/>
</dbReference>
<dbReference type="CCDS" id="CCDS88904.1">
    <molecule id="P98064-2"/>
</dbReference>
<dbReference type="PIR" id="PC1235">
    <property type="entry name" value="PC1235"/>
</dbReference>
<dbReference type="RefSeq" id="NP_001346012.1">
    <molecule id="P98064-2"/>
    <property type="nucleotide sequence ID" value="NM_001359083.1"/>
</dbReference>
<dbReference type="RefSeq" id="NP_032581.2">
    <molecule id="P98064-1"/>
    <property type="nucleotide sequence ID" value="NM_008555.3"/>
</dbReference>
<dbReference type="RefSeq" id="XP_006521891.1">
    <property type="nucleotide sequence ID" value="XM_006521828.3"/>
</dbReference>
<dbReference type="SMR" id="P98064"/>
<dbReference type="BioGRID" id="201316">
    <property type="interactions" value="2"/>
</dbReference>
<dbReference type="FunCoup" id="P98064">
    <property type="interactions" value="308"/>
</dbReference>
<dbReference type="STRING" id="10090.ENSMUSP00000087327"/>
<dbReference type="MEROPS" id="S01.132"/>
<dbReference type="MEROPS" id="S01.198"/>
<dbReference type="GlyCosmos" id="P98064">
    <property type="glycosylation" value="4 sites, No reported glycans"/>
</dbReference>
<dbReference type="GlyGen" id="P98064">
    <property type="glycosylation" value="5 sites, 1 N-linked glycan (1 site)"/>
</dbReference>
<dbReference type="iPTMnet" id="P98064"/>
<dbReference type="PhosphoSitePlus" id="P98064"/>
<dbReference type="CPTAC" id="non-CPTAC-3723"/>
<dbReference type="PaxDb" id="10090-ENSMUSP00000087327"/>
<dbReference type="PeptideAtlas" id="P98064"/>
<dbReference type="ProteomicsDB" id="292089">
    <molecule id="P98064-1"/>
</dbReference>
<dbReference type="ProteomicsDB" id="292090">
    <molecule id="P98064-2"/>
</dbReference>
<dbReference type="Pumba" id="P98064"/>
<dbReference type="Antibodypedia" id="889">
    <property type="antibodies" value="374 antibodies from 28 providers"/>
</dbReference>
<dbReference type="DNASU" id="17174"/>
<dbReference type="Ensembl" id="ENSMUST00000089883.7">
    <molecule id="P98064-1"/>
    <property type="protein sequence ID" value="ENSMUSP00000087327.6"/>
    <property type="gene ID" value="ENSMUSG00000022887.10"/>
</dbReference>
<dbReference type="Ensembl" id="ENSMUST00000229619.2">
    <molecule id="P98064-2"/>
    <property type="protein sequence ID" value="ENSMUSP00000155665.2"/>
    <property type="gene ID" value="ENSMUSG00000022887.10"/>
</dbReference>
<dbReference type="GeneID" id="17174"/>
<dbReference type="KEGG" id="mmu:17174"/>
<dbReference type="UCSC" id="uc007ytr.1">
    <molecule id="P98064-1"/>
    <property type="organism name" value="mouse"/>
</dbReference>
<dbReference type="UCSC" id="uc007yts.1">
    <molecule id="P98064-2"/>
    <property type="organism name" value="mouse"/>
</dbReference>
<dbReference type="AGR" id="MGI:88492"/>
<dbReference type="CTD" id="5648"/>
<dbReference type="MGI" id="MGI:88492">
    <property type="gene designation" value="Masp1"/>
</dbReference>
<dbReference type="VEuPathDB" id="HostDB:ENSMUSG00000022887"/>
<dbReference type="eggNOG" id="KOG3627">
    <property type="taxonomic scope" value="Eukaryota"/>
</dbReference>
<dbReference type="GeneTree" id="ENSGT00950000183084"/>
<dbReference type="HOGENOM" id="CLU_006842_14_1_1"/>
<dbReference type="InParanoid" id="P98064"/>
<dbReference type="OMA" id="QHWVAQG"/>
<dbReference type="PhylomeDB" id="P98064"/>
<dbReference type="TreeFam" id="TF330373"/>
<dbReference type="BRENDA" id="3.4.21.B7">
    <property type="organism ID" value="3474"/>
</dbReference>
<dbReference type="Reactome" id="R-MMU-166662">
    <property type="pathway name" value="Lectin pathway of complement activation"/>
</dbReference>
<dbReference type="Reactome" id="R-MMU-166663">
    <property type="pathway name" value="Initial triggering of complement"/>
</dbReference>
<dbReference type="Reactome" id="R-MMU-2855086">
    <property type="pathway name" value="Ficolins bind to repetitive carbohydrate structures on the target cell surface"/>
</dbReference>
<dbReference type="Reactome" id="R-MMU-3000480">
    <property type="pathway name" value="Scavenging by Class A Receptors"/>
</dbReference>
<dbReference type="BioGRID-ORCS" id="17174">
    <property type="hits" value="5 hits in 78 CRISPR screens"/>
</dbReference>
<dbReference type="ChiTaRS" id="Masp1">
    <property type="organism name" value="mouse"/>
</dbReference>
<dbReference type="PRO" id="PR:P98064"/>
<dbReference type="Proteomes" id="UP000000589">
    <property type="component" value="Chromosome 16"/>
</dbReference>
<dbReference type="RNAct" id="P98064">
    <property type="molecule type" value="protein"/>
</dbReference>
<dbReference type="Bgee" id="ENSMUSG00000022887">
    <property type="expression patterns" value="Expressed in decidua and 169 other cell types or tissues"/>
</dbReference>
<dbReference type="ExpressionAtlas" id="P98064">
    <property type="expression patterns" value="baseline and differential"/>
</dbReference>
<dbReference type="GO" id="GO:0005829">
    <property type="term" value="C:cytosol"/>
    <property type="evidence" value="ECO:0007669"/>
    <property type="project" value="Ensembl"/>
</dbReference>
<dbReference type="GO" id="GO:0005615">
    <property type="term" value="C:extracellular space"/>
    <property type="evidence" value="ECO:0000314"/>
    <property type="project" value="UniProtKB"/>
</dbReference>
<dbReference type="GO" id="GO:0005654">
    <property type="term" value="C:nucleoplasm"/>
    <property type="evidence" value="ECO:0007669"/>
    <property type="project" value="Ensembl"/>
</dbReference>
<dbReference type="GO" id="GO:0005509">
    <property type="term" value="F:calcium ion binding"/>
    <property type="evidence" value="ECO:0000250"/>
    <property type="project" value="UniProtKB"/>
</dbReference>
<dbReference type="GO" id="GO:0048306">
    <property type="term" value="F:calcium-dependent protein binding"/>
    <property type="evidence" value="ECO:0007669"/>
    <property type="project" value="Ensembl"/>
</dbReference>
<dbReference type="GO" id="GO:0042803">
    <property type="term" value="F:protein homodimerization activity"/>
    <property type="evidence" value="ECO:0000250"/>
    <property type="project" value="UniProtKB"/>
</dbReference>
<dbReference type="GO" id="GO:0004252">
    <property type="term" value="F:serine-type endopeptidase activity"/>
    <property type="evidence" value="ECO:0000314"/>
    <property type="project" value="UniProtKB"/>
</dbReference>
<dbReference type="GO" id="GO:0001867">
    <property type="term" value="P:complement activation, lectin pathway"/>
    <property type="evidence" value="ECO:0000315"/>
    <property type="project" value="UniProtKB"/>
</dbReference>
<dbReference type="GO" id="GO:0006508">
    <property type="term" value="P:proteolysis"/>
    <property type="evidence" value="ECO:0007669"/>
    <property type="project" value="UniProtKB-KW"/>
</dbReference>
<dbReference type="CDD" id="cd00033">
    <property type="entry name" value="CCP"/>
    <property type="match status" value="2"/>
</dbReference>
<dbReference type="CDD" id="cd00041">
    <property type="entry name" value="CUB"/>
    <property type="match status" value="2"/>
</dbReference>
<dbReference type="CDD" id="cd00054">
    <property type="entry name" value="EGF_CA"/>
    <property type="match status" value="1"/>
</dbReference>
<dbReference type="CDD" id="cd00190">
    <property type="entry name" value="Tryp_SPc"/>
    <property type="match status" value="1"/>
</dbReference>
<dbReference type="FunFam" id="2.40.10.10:FF:000015">
    <property type="entry name" value="Atrial natriuretic peptide-converting enzyme"/>
    <property type="match status" value="1"/>
</dbReference>
<dbReference type="FunFam" id="2.10.25.10:FF:000059">
    <property type="entry name" value="Mannan-binding lectin serine protease 1"/>
    <property type="match status" value="1"/>
</dbReference>
<dbReference type="FunFam" id="2.10.70.10:FF:000016">
    <property type="entry name" value="Mannan-binding lectin serine protease 1"/>
    <property type="match status" value="1"/>
</dbReference>
<dbReference type="FunFam" id="2.60.120.290:FF:000006">
    <property type="entry name" value="Mannan-binding lectin serine protease 1"/>
    <property type="match status" value="1"/>
</dbReference>
<dbReference type="FunFam" id="2.60.120.290:FF:000012">
    <property type="entry name" value="mannan-binding lectin serine protease 1 isoform X1"/>
    <property type="match status" value="1"/>
</dbReference>
<dbReference type="FunFam" id="2.10.70.10:FF:000028">
    <property type="entry name" value="mannan-binding lectin serine protease 1 isoform X2"/>
    <property type="match status" value="1"/>
</dbReference>
<dbReference type="Gene3D" id="2.10.70.10">
    <property type="entry name" value="Complement Module, domain 1"/>
    <property type="match status" value="2"/>
</dbReference>
<dbReference type="Gene3D" id="2.10.25.10">
    <property type="entry name" value="Laminin"/>
    <property type="match status" value="1"/>
</dbReference>
<dbReference type="Gene3D" id="2.60.120.290">
    <property type="entry name" value="Spermadhesin, CUB domain"/>
    <property type="match status" value="2"/>
</dbReference>
<dbReference type="Gene3D" id="2.40.10.10">
    <property type="entry name" value="Trypsin-like serine proteases"/>
    <property type="match status" value="1"/>
</dbReference>
<dbReference type="InterPro" id="IPR000859">
    <property type="entry name" value="CUB_dom"/>
</dbReference>
<dbReference type="InterPro" id="IPR001881">
    <property type="entry name" value="EGF-like_Ca-bd_dom"/>
</dbReference>
<dbReference type="InterPro" id="IPR000742">
    <property type="entry name" value="EGF-like_dom"/>
</dbReference>
<dbReference type="InterPro" id="IPR018097">
    <property type="entry name" value="EGF_Ca-bd_CS"/>
</dbReference>
<dbReference type="InterPro" id="IPR049883">
    <property type="entry name" value="NOTCH1_EGF-like"/>
</dbReference>
<dbReference type="InterPro" id="IPR024175">
    <property type="entry name" value="Pept_S1A_C1r/C1S/mannan-bd"/>
</dbReference>
<dbReference type="InterPro" id="IPR009003">
    <property type="entry name" value="Peptidase_S1_PA"/>
</dbReference>
<dbReference type="InterPro" id="IPR043504">
    <property type="entry name" value="Peptidase_S1_PA_chymotrypsin"/>
</dbReference>
<dbReference type="InterPro" id="IPR001314">
    <property type="entry name" value="Peptidase_S1A"/>
</dbReference>
<dbReference type="InterPro" id="IPR035914">
    <property type="entry name" value="Sperma_CUB_dom_sf"/>
</dbReference>
<dbReference type="InterPro" id="IPR035976">
    <property type="entry name" value="Sushi/SCR/CCP_sf"/>
</dbReference>
<dbReference type="InterPro" id="IPR000436">
    <property type="entry name" value="Sushi_SCR_CCP_dom"/>
</dbReference>
<dbReference type="InterPro" id="IPR001254">
    <property type="entry name" value="Trypsin_dom"/>
</dbReference>
<dbReference type="InterPro" id="IPR018114">
    <property type="entry name" value="TRYPSIN_HIS"/>
</dbReference>
<dbReference type="InterPro" id="IPR033116">
    <property type="entry name" value="TRYPSIN_SER"/>
</dbReference>
<dbReference type="PANTHER" id="PTHR24255">
    <property type="entry name" value="COMPLEMENT COMPONENT 1, S SUBCOMPONENT-RELATED"/>
    <property type="match status" value="1"/>
</dbReference>
<dbReference type="PANTHER" id="PTHR24255:SF13">
    <property type="entry name" value="MANNAN-BINDING LECTIN SERINE PROTEASE 1"/>
    <property type="match status" value="1"/>
</dbReference>
<dbReference type="Pfam" id="PF00431">
    <property type="entry name" value="CUB"/>
    <property type="match status" value="2"/>
</dbReference>
<dbReference type="Pfam" id="PF07645">
    <property type="entry name" value="EGF_CA"/>
    <property type="match status" value="1"/>
</dbReference>
<dbReference type="Pfam" id="PF00084">
    <property type="entry name" value="Sushi"/>
    <property type="match status" value="2"/>
</dbReference>
<dbReference type="Pfam" id="PF00089">
    <property type="entry name" value="Trypsin"/>
    <property type="match status" value="1"/>
</dbReference>
<dbReference type="PIRSF" id="PIRSF001155">
    <property type="entry name" value="C1r_C1s_MASP"/>
    <property type="match status" value="1"/>
</dbReference>
<dbReference type="PRINTS" id="PR00722">
    <property type="entry name" value="CHYMOTRYPSIN"/>
</dbReference>
<dbReference type="SMART" id="SM00032">
    <property type="entry name" value="CCP"/>
    <property type="match status" value="2"/>
</dbReference>
<dbReference type="SMART" id="SM00042">
    <property type="entry name" value="CUB"/>
    <property type="match status" value="2"/>
</dbReference>
<dbReference type="SMART" id="SM00179">
    <property type="entry name" value="EGF_CA"/>
    <property type="match status" value="1"/>
</dbReference>
<dbReference type="SMART" id="SM00020">
    <property type="entry name" value="Tryp_SPc"/>
    <property type="match status" value="1"/>
</dbReference>
<dbReference type="SUPFAM" id="SSF57535">
    <property type="entry name" value="Complement control module/SCR domain"/>
    <property type="match status" value="1"/>
</dbReference>
<dbReference type="SUPFAM" id="SSF57196">
    <property type="entry name" value="EGF/Laminin"/>
    <property type="match status" value="1"/>
</dbReference>
<dbReference type="SUPFAM" id="SSF49854">
    <property type="entry name" value="Spermadhesin, CUB domain"/>
    <property type="match status" value="2"/>
</dbReference>
<dbReference type="SUPFAM" id="SSF50494">
    <property type="entry name" value="Trypsin-like serine proteases"/>
    <property type="match status" value="1"/>
</dbReference>
<dbReference type="PROSITE" id="PS00010">
    <property type="entry name" value="ASX_HYDROXYL"/>
    <property type="match status" value="1"/>
</dbReference>
<dbReference type="PROSITE" id="PS01180">
    <property type="entry name" value="CUB"/>
    <property type="match status" value="2"/>
</dbReference>
<dbReference type="PROSITE" id="PS01186">
    <property type="entry name" value="EGF_2"/>
    <property type="match status" value="1"/>
</dbReference>
<dbReference type="PROSITE" id="PS01187">
    <property type="entry name" value="EGF_CA"/>
    <property type="match status" value="1"/>
</dbReference>
<dbReference type="PROSITE" id="PS50923">
    <property type="entry name" value="SUSHI"/>
    <property type="match status" value="2"/>
</dbReference>
<dbReference type="PROSITE" id="PS50240">
    <property type="entry name" value="TRYPSIN_DOM"/>
    <property type="match status" value="1"/>
</dbReference>
<dbReference type="PROSITE" id="PS00134">
    <property type="entry name" value="TRYPSIN_HIS"/>
    <property type="match status" value="1"/>
</dbReference>
<dbReference type="PROSITE" id="PS00135">
    <property type="entry name" value="TRYPSIN_SER"/>
    <property type="match status" value="1"/>
</dbReference>
<organism>
    <name type="scientific">Mus musculus</name>
    <name type="common">Mouse</name>
    <dbReference type="NCBI Taxonomy" id="10090"/>
    <lineage>
        <taxon>Eukaryota</taxon>
        <taxon>Metazoa</taxon>
        <taxon>Chordata</taxon>
        <taxon>Craniata</taxon>
        <taxon>Vertebrata</taxon>
        <taxon>Euteleostomi</taxon>
        <taxon>Mammalia</taxon>
        <taxon>Eutheria</taxon>
        <taxon>Euarchontoglires</taxon>
        <taxon>Glires</taxon>
        <taxon>Rodentia</taxon>
        <taxon>Myomorpha</taxon>
        <taxon>Muroidea</taxon>
        <taxon>Muridae</taxon>
        <taxon>Murinae</taxon>
        <taxon>Mus</taxon>
        <taxon>Mus</taxon>
    </lineage>
</organism>
<proteinExistence type="evidence at protein level"/>
<comment type="function">
    <text evidence="2 7">Functions in the lectin pathway of complement, which performs a key role in innate immunity by recognizing pathogens through patterns of sugar moieties and neutralizing them. The lectin pathway is triggered upon binding of mannan-binding lectin (MBL) and ficolins to sugar moieties which leads to activation of the associated proteases MASP1 and MASP2. Functions as an endopeptidase and may activate MASP2 or C2 or directly activate C3 the key component of complement reaction. Isoform 2 may have an inhibitory effect on the activation of the lectin pathway of complement or may cleave IGFBP5. Also plays a role in development.</text>
</comment>
<comment type="activity regulation">
    <text evidence="1">Inhibited by SERPING1 and A2M.</text>
</comment>
<comment type="subunit">
    <text evidence="2">Homodimer. Interacts with the oligomeric lectins MBL2, FCN2 and FCN3; triggers the lectin pathway of complement through activation of C3. Interacts with SERPING1. Interacts with COLEC11; probably triggers the lectin pathway of complement.</text>
</comment>
<comment type="subcellular location">
    <subcellularLocation>
        <location evidence="8">Secreted</location>
    </subcellularLocation>
</comment>
<comment type="alternative products">
    <event type="alternative splicing"/>
    <isoform>
        <id>P98064-1</id>
        <name>1</name>
        <name>MASP-1</name>
        <sequence type="displayed"/>
    </isoform>
    <isoform>
        <id>P98064-2</id>
        <name>2</name>
        <name>MASP-3</name>
        <sequence type="described" ref="VSP_036814 VSP_036815"/>
    </isoform>
</comment>
<comment type="tissue specificity">
    <text evidence="7 8">Protein of the plasma which is primarily expressed by liver.</text>
</comment>
<comment type="PTM">
    <text evidence="1">The iron and 2-oxoglutarate dependent 3-hydroxylation of aspartate and asparagine is (R) stereospecific within EGF domains.</text>
</comment>
<comment type="PTM">
    <text evidence="1">N-glycosylated. Some N-linked glycan are of the complex-type (By similarity).</text>
</comment>
<comment type="PTM">
    <text evidence="1">Autoproteolytic processing of the proenzyme produces the active enzyme composed on the heavy and the light chain held together by a disulfide bond. Isoform 1 but not isoform 2 is activated through autoproteolytic processing (By similarity).</text>
</comment>
<comment type="disruption phenotype">
    <text evidence="7">Mice are smaller and more vulnerable indicating developmental and growth defects. Mice serum has low C4 and C3 cleavage activity together with low MASP2 activation.</text>
</comment>
<comment type="miscellaneous">
    <molecule>Isoform 2</molecule>
    <text evidence="2">Contains a N-linked (GlcNAc...) asparagine at position 538 Contains a N-linked (GlcNAc...) asparagine at position 604.</text>
</comment>
<comment type="similarity">
    <text evidence="5">Belongs to the peptidase S1 family.</text>
</comment>
<protein>
    <recommendedName>
        <fullName>Mannan-binding lectin serine protease 1</fullName>
        <ecNumber>3.4.21.-</ecNumber>
    </recommendedName>
    <alternativeName>
        <fullName>Complement factor MASP-3</fullName>
    </alternativeName>
    <alternativeName>
        <fullName>Complement-activating component of Ra-reactive factor</fullName>
    </alternativeName>
    <alternativeName>
        <fullName>Mannose-binding lectin-associated serine protease 1</fullName>
        <shortName>MASP-1</shortName>
    </alternativeName>
    <alternativeName>
        <fullName>Mannose-binding protein-associated serine protease</fullName>
    </alternativeName>
    <alternativeName>
        <fullName>Ra-reactive factor serine protease p100</fullName>
        <shortName>RaRF</shortName>
    </alternativeName>
    <alternativeName>
        <fullName>Serine protease 5</fullName>
    </alternativeName>
    <component>
        <recommendedName>
            <fullName>Mannan-binding lectin serine protease 1 heavy chain</fullName>
        </recommendedName>
    </component>
    <component>
        <recommendedName>
            <fullName>Mannan-binding lectin serine protease 1 light chain</fullName>
        </recommendedName>
    </component>
</protein>
<evidence type="ECO:0000250" key="1"/>
<evidence type="ECO:0000250" key="2">
    <source>
        <dbReference type="UniProtKB" id="P48740"/>
    </source>
</evidence>
<evidence type="ECO:0000255" key="3"/>
<evidence type="ECO:0000255" key="4">
    <source>
        <dbReference type="PROSITE-ProRule" id="PRU00059"/>
    </source>
</evidence>
<evidence type="ECO:0000255" key="5">
    <source>
        <dbReference type="PROSITE-ProRule" id="PRU00274"/>
    </source>
</evidence>
<evidence type="ECO:0000255" key="6">
    <source>
        <dbReference type="PROSITE-ProRule" id="PRU00302"/>
    </source>
</evidence>
<evidence type="ECO:0000269" key="7">
    <source>
    </source>
</evidence>
<evidence type="ECO:0000269" key="8">
    <source>
    </source>
</evidence>
<evidence type="ECO:0000303" key="9">
    <source>
    </source>
</evidence>
<evidence type="ECO:0000303" key="10">
    <source>
    </source>
</evidence>
<evidence type="ECO:0000305" key="11"/>
<feature type="signal peptide">
    <location>
        <begin position="1"/>
        <end position="24"/>
    </location>
</feature>
<feature type="chain" id="PRO_0000027595" description="Mannan-binding lectin serine protease 1">
    <location>
        <begin position="25"/>
        <end position="704"/>
    </location>
</feature>
<feature type="chain" id="PRO_0000027596" description="Mannan-binding lectin serine protease 1 heavy chain">
    <location>
        <begin position="25"/>
        <end position="453"/>
    </location>
</feature>
<feature type="chain" id="PRO_0000027597" description="Mannan-binding lectin serine protease 1 light chain">
    <location>
        <begin position="454"/>
        <end position="704"/>
    </location>
</feature>
<feature type="domain" description="CUB 1" evidence="4">
    <location>
        <begin position="25"/>
        <end position="143"/>
    </location>
</feature>
<feature type="domain" description="EGF-like; calcium-binding" evidence="1">
    <location>
        <begin position="144"/>
        <end position="187"/>
    </location>
</feature>
<feature type="domain" description="CUB 2" evidence="4">
    <location>
        <begin position="190"/>
        <end position="302"/>
    </location>
</feature>
<feature type="domain" description="Sushi 1" evidence="6">
    <location>
        <begin position="304"/>
        <end position="369"/>
    </location>
</feature>
<feature type="domain" description="Sushi 2" evidence="6">
    <location>
        <begin position="370"/>
        <end position="439"/>
    </location>
</feature>
<feature type="domain" description="Peptidase S1" evidence="5">
    <location>
        <begin position="454"/>
        <end position="701"/>
    </location>
</feature>
<feature type="region of interest" description="Interaction with MBL1" evidence="1">
    <location>
        <begin position="25"/>
        <end position="305"/>
    </location>
</feature>
<feature type="region of interest" description="Interaction with FCN2" evidence="1">
    <location>
        <begin position="25"/>
        <end position="283"/>
    </location>
</feature>
<feature type="region of interest" description="Homodimerization" evidence="1">
    <location>
        <begin position="25"/>
        <end position="189"/>
    </location>
</feature>
<feature type="region of interest" description="Interaction with MBL2" evidence="1">
    <location>
        <begin position="25"/>
        <end position="189"/>
    </location>
</feature>
<feature type="active site" description="Charge relay system" evidence="1">
    <location>
        <position position="495"/>
    </location>
</feature>
<feature type="active site" description="Charge relay system" evidence="1">
    <location>
        <position position="557"/>
    </location>
</feature>
<feature type="active site" description="Charge relay system" evidence="1">
    <location>
        <position position="651"/>
    </location>
</feature>
<feature type="binding site" evidence="1">
    <location>
        <position position="73"/>
    </location>
    <ligand>
        <name>Ca(2+)</name>
        <dbReference type="ChEBI" id="CHEBI:29108"/>
        <label>1</label>
    </ligand>
</feature>
<feature type="binding site" evidence="1">
    <location>
        <position position="81"/>
    </location>
    <ligand>
        <name>Ca(2+)</name>
        <dbReference type="ChEBI" id="CHEBI:29108"/>
        <label>1</label>
    </ligand>
</feature>
<feature type="binding site" evidence="1">
    <location>
        <position position="126"/>
    </location>
    <ligand>
        <name>Ca(2+)</name>
        <dbReference type="ChEBI" id="CHEBI:29108"/>
        <label>1</label>
    </ligand>
</feature>
<feature type="binding site" evidence="1">
    <location>
        <position position="128"/>
    </location>
    <ligand>
        <name>Ca(2+)</name>
        <dbReference type="ChEBI" id="CHEBI:29108"/>
        <label>1</label>
    </ligand>
</feature>
<feature type="binding site" evidence="1">
    <location>
        <position position="144"/>
    </location>
    <ligand>
        <name>Ca(2+)</name>
        <dbReference type="ChEBI" id="CHEBI:29108"/>
        <label>2</label>
    </ligand>
</feature>
<feature type="binding site" evidence="1">
    <location>
        <position position="145"/>
    </location>
    <ligand>
        <name>Ca(2+)</name>
        <dbReference type="ChEBI" id="CHEBI:29108"/>
        <label>2</label>
    </ligand>
</feature>
<feature type="binding site" evidence="1">
    <location>
        <position position="147"/>
    </location>
    <ligand>
        <name>Ca(2+)</name>
        <dbReference type="ChEBI" id="CHEBI:29108"/>
        <label>2</label>
    </ligand>
</feature>
<feature type="binding site" evidence="1">
    <location>
        <position position="164"/>
    </location>
    <ligand>
        <name>Ca(2+)</name>
        <dbReference type="ChEBI" id="CHEBI:29108"/>
        <label>2</label>
    </ligand>
</feature>
<feature type="binding site" evidence="1">
    <location>
        <position position="165"/>
    </location>
    <ligand>
        <name>Ca(2+)</name>
        <dbReference type="ChEBI" id="CHEBI:29108"/>
        <label>2</label>
    </ligand>
</feature>
<feature type="binding site" evidence="1">
    <location>
        <position position="168"/>
    </location>
    <ligand>
        <name>Ca(2+)</name>
        <dbReference type="ChEBI" id="CHEBI:29108"/>
        <label>2</label>
    </ligand>
</feature>
<feature type="binding site" evidence="1">
    <location>
        <position position="240"/>
    </location>
    <ligand>
        <name>Ca(2+)</name>
        <dbReference type="ChEBI" id="CHEBI:29108"/>
        <label>3</label>
    </ligand>
</feature>
<feature type="binding site" evidence="1">
    <location>
        <position position="250"/>
    </location>
    <ligand>
        <name>Ca(2+)</name>
        <dbReference type="ChEBI" id="CHEBI:29108"/>
        <label>3</label>
    </ligand>
</feature>
<feature type="binding site" evidence="1">
    <location>
        <position position="287"/>
    </location>
    <ligand>
        <name>Ca(2+)</name>
        <dbReference type="ChEBI" id="CHEBI:29108"/>
        <label>3</label>
    </ligand>
</feature>
<feature type="binding site" evidence="1">
    <location>
        <position position="289"/>
    </location>
    <ligand>
        <name>Ca(2+)</name>
        <dbReference type="ChEBI" id="CHEBI:29108"/>
        <label>3</label>
    </ligand>
</feature>
<feature type="site" description="Cleavage; by autolysis" evidence="1">
    <location>
        <begin position="453"/>
        <end position="454"/>
    </location>
</feature>
<feature type="modified residue" description="(3R)-3-hydroxyasparagine" evidence="3">
    <location>
        <position position="164"/>
    </location>
</feature>
<feature type="glycosylation site" description="N-linked (GlcNAc...) asparagine" evidence="3">
    <location>
        <position position="54"/>
    </location>
</feature>
<feature type="glycosylation site" description="N-linked (GlcNAc...) asparagine" evidence="3">
    <location>
        <position position="183"/>
    </location>
</feature>
<feature type="glycosylation site" description="N-linked (GlcNAc...) asparagine" evidence="3">
    <location>
        <position position="390"/>
    </location>
</feature>
<feature type="glycosylation site" description="N-linked (GlcNAc...) asparagine" evidence="3">
    <location>
        <position position="412"/>
    </location>
</feature>
<feature type="disulfide bond" evidence="1">
    <location>
        <begin position="78"/>
        <end position="96"/>
    </location>
</feature>
<feature type="disulfide bond" evidence="1">
    <location>
        <begin position="148"/>
        <end position="162"/>
    </location>
</feature>
<feature type="disulfide bond" evidence="1">
    <location>
        <begin position="158"/>
        <end position="171"/>
    </location>
</feature>
<feature type="disulfide bond" evidence="1">
    <location>
        <begin position="173"/>
        <end position="186"/>
    </location>
</feature>
<feature type="disulfide bond" evidence="1">
    <location>
        <begin position="190"/>
        <end position="217"/>
    </location>
</feature>
<feature type="disulfide bond" evidence="1">
    <location>
        <begin position="247"/>
        <end position="265"/>
    </location>
</feature>
<feature type="disulfide bond" evidence="1">
    <location>
        <begin position="306"/>
        <end position="354"/>
    </location>
</feature>
<feature type="disulfide bond" evidence="1">
    <location>
        <begin position="334"/>
        <end position="367"/>
    </location>
</feature>
<feature type="disulfide bond" evidence="1">
    <location>
        <begin position="372"/>
        <end position="419"/>
    </location>
</feature>
<feature type="disulfide bond" evidence="1">
    <location>
        <begin position="402"/>
        <end position="437"/>
    </location>
</feature>
<feature type="disulfide bond" description="Interchain (between heavy and light chains)" evidence="4 5 6">
    <location>
        <begin position="441"/>
        <end position="577"/>
    </location>
</feature>
<feature type="disulfide bond" evidence="1">
    <location>
        <begin position="480"/>
        <end position="496"/>
    </location>
</feature>
<feature type="disulfide bond" evidence="1">
    <location>
        <begin position="619"/>
        <end position="636"/>
    </location>
</feature>
<feature type="disulfide bond" evidence="1">
    <location>
        <begin position="647"/>
        <end position="677"/>
    </location>
</feature>
<feature type="splice variant" id="VSP_036814" description="In isoform 2." evidence="9 10">
    <original>V</original>
    <variation>QPSRALPNLVKRIIGGRNAELGLFPWQALIVVEDTSRVPNDKWFGSGALLSESWILTAAHVLRSQRRDNTVIPVSKEHVTVYLGLHDVRDKSGAVNSSAARVILHPDFNIQNYNHDIALVQLQKPVPLGAHVMPICLPRPEPEGPAPHMLGLVAGWGISNPNVTVDEIILSGTRTLSDVLQYVKLPVVSHAECKASYESRSGNYSVTENMFCAGYYEGGKDTCLGDSGGAFVIFDEMSQHWVAQGLVSWGGPEECGSKQVYGVYTKVSNYVDWLWEEMNSPRAVRDLQVER</variation>
    <location>
        <position position="443"/>
    </location>
</feature>
<feature type="splice variant" id="VSP_036815" description="In isoform 2." evidence="9 10">
    <location>
        <begin position="444"/>
        <end position="704"/>
    </location>
</feature>
<feature type="sequence conflict" description="In Ref. 5; AAI31638." evidence="11" ref="5">
    <original>G</original>
    <variation>A</variation>
    <location>
        <position position="257"/>
    </location>
</feature>
<feature type="sequence conflict" description="In Ref. 1; BAA03944 and 2; BAB69688." evidence="11" ref="1 2">
    <original>E</original>
    <variation>G</variation>
    <location>
        <position position="345"/>
    </location>
</feature>
<feature type="sequence conflict" description="In Ref. 1; BAA03944." evidence="11" ref="1">
    <original>E</original>
    <variation>K</variation>
    <location>
        <position position="428"/>
    </location>
</feature>
<feature type="sequence conflict" description="In Ref. 2; AAN39850." evidence="11" ref="2">
    <original>M</original>
    <variation>T</variation>
    <location>
        <position position="465"/>
    </location>
</feature>
<reference key="1">
    <citation type="journal article" date="1994" name="J. Immunol.">
        <title>A 100-kDa protein in the C4-activating component of Ra-reactive factor is a new serine protease having module organization similar to C1r and C1s.</title>
        <authorList>
            <person name="Takayama Y."/>
            <person name="Takada F."/>
            <person name="Takahashi A."/>
            <person name="Kawakami M."/>
        </authorList>
    </citation>
    <scope>NUCLEOTIDE SEQUENCE [MRNA] (ISOFORM 1)</scope>
    <scope>PARTIAL PROTEIN SEQUENCE</scope>
    <scope>SUBCELLULAR LOCATION</scope>
    <scope>TISSUE SPECIFICITY</scope>
    <source>
        <strain>BALB/cJ</strain>
        <tissue>Liver</tissue>
    </source>
</reference>
<reference key="2">
    <citation type="journal article" date="2003" name="Genes Immun.">
        <title>Murine serine proteases MASP-1 and MASP-3, components of the lectin pathway activation complex of complement, are encoded by a single structural gene.</title>
        <authorList>
            <person name="Stover C.M."/>
            <person name="Lynch N.J."/>
            <person name="Dahl M.R."/>
            <person name="Hanson S."/>
            <person name="Takahashi M."/>
            <person name="Frankenberger M."/>
            <person name="Ziegler-Heitbrock L."/>
            <person name="Eperon I."/>
            <person name="Thiel S."/>
            <person name="Schwaeble W.J."/>
        </authorList>
    </citation>
    <scope>NUCLEOTIDE SEQUENCE [GENOMIC DNA / MRNA] (ISOFORM 2)</scope>
    <scope>ALTERNATIVE SPLICING (ISOFORM 1)</scope>
    <source>
        <strain>BALB/cJ</strain>
        <tissue>Liver</tissue>
    </source>
</reference>
<reference key="3">
    <citation type="journal article" date="2005" name="Science">
        <title>The transcriptional landscape of the mammalian genome.</title>
        <authorList>
            <person name="Carninci P."/>
            <person name="Kasukawa T."/>
            <person name="Katayama S."/>
            <person name="Gough J."/>
            <person name="Frith M.C."/>
            <person name="Maeda N."/>
            <person name="Oyama R."/>
            <person name="Ravasi T."/>
            <person name="Lenhard B."/>
            <person name="Wells C."/>
            <person name="Kodzius R."/>
            <person name="Shimokawa K."/>
            <person name="Bajic V.B."/>
            <person name="Brenner S.E."/>
            <person name="Batalov S."/>
            <person name="Forrest A.R."/>
            <person name="Zavolan M."/>
            <person name="Davis M.J."/>
            <person name="Wilming L.G."/>
            <person name="Aidinis V."/>
            <person name="Allen J.E."/>
            <person name="Ambesi-Impiombato A."/>
            <person name="Apweiler R."/>
            <person name="Aturaliya R.N."/>
            <person name="Bailey T.L."/>
            <person name="Bansal M."/>
            <person name="Baxter L."/>
            <person name="Beisel K.W."/>
            <person name="Bersano T."/>
            <person name="Bono H."/>
            <person name="Chalk A.M."/>
            <person name="Chiu K.P."/>
            <person name="Choudhary V."/>
            <person name="Christoffels A."/>
            <person name="Clutterbuck D.R."/>
            <person name="Crowe M.L."/>
            <person name="Dalla E."/>
            <person name="Dalrymple B.P."/>
            <person name="de Bono B."/>
            <person name="Della Gatta G."/>
            <person name="di Bernardo D."/>
            <person name="Down T."/>
            <person name="Engstrom P."/>
            <person name="Fagiolini M."/>
            <person name="Faulkner G."/>
            <person name="Fletcher C.F."/>
            <person name="Fukushima T."/>
            <person name="Furuno M."/>
            <person name="Futaki S."/>
            <person name="Gariboldi M."/>
            <person name="Georgii-Hemming P."/>
            <person name="Gingeras T.R."/>
            <person name="Gojobori T."/>
            <person name="Green R.E."/>
            <person name="Gustincich S."/>
            <person name="Harbers M."/>
            <person name="Hayashi Y."/>
            <person name="Hensch T.K."/>
            <person name="Hirokawa N."/>
            <person name="Hill D."/>
            <person name="Huminiecki L."/>
            <person name="Iacono M."/>
            <person name="Ikeo K."/>
            <person name="Iwama A."/>
            <person name="Ishikawa T."/>
            <person name="Jakt M."/>
            <person name="Kanapin A."/>
            <person name="Katoh M."/>
            <person name="Kawasawa Y."/>
            <person name="Kelso J."/>
            <person name="Kitamura H."/>
            <person name="Kitano H."/>
            <person name="Kollias G."/>
            <person name="Krishnan S.P."/>
            <person name="Kruger A."/>
            <person name="Kummerfeld S.K."/>
            <person name="Kurochkin I.V."/>
            <person name="Lareau L.F."/>
            <person name="Lazarevic D."/>
            <person name="Lipovich L."/>
            <person name="Liu J."/>
            <person name="Liuni S."/>
            <person name="McWilliam S."/>
            <person name="Madan Babu M."/>
            <person name="Madera M."/>
            <person name="Marchionni L."/>
            <person name="Matsuda H."/>
            <person name="Matsuzawa S."/>
            <person name="Miki H."/>
            <person name="Mignone F."/>
            <person name="Miyake S."/>
            <person name="Morris K."/>
            <person name="Mottagui-Tabar S."/>
            <person name="Mulder N."/>
            <person name="Nakano N."/>
            <person name="Nakauchi H."/>
            <person name="Ng P."/>
            <person name="Nilsson R."/>
            <person name="Nishiguchi S."/>
            <person name="Nishikawa S."/>
            <person name="Nori F."/>
            <person name="Ohara O."/>
            <person name="Okazaki Y."/>
            <person name="Orlando V."/>
            <person name="Pang K.C."/>
            <person name="Pavan W.J."/>
            <person name="Pavesi G."/>
            <person name="Pesole G."/>
            <person name="Petrovsky N."/>
            <person name="Piazza S."/>
            <person name="Reed J."/>
            <person name="Reid J.F."/>
            <person name="Ring B.Z."/>
            <person name="Ringwald M."/>
            <person name="Rost B."/>
            <person name="Ruan Y."/>
            <person name="Salzberg S.L."/>
            <person name="Sandelin A."/>
            <person name="Schneider C."/>
            <person name="Schoenbach C."/>
            <person name="Sekiguchi K."/>
            <person name="Semple C.A."/>
            <person name="Seno S."/>
            <person name="Sessa L."/>
            <person name="Sheng Y."/>
            <person name="Shibata Y."/>
            <person name="Shimada H."/>
            <person name="Shimada K."/>
            <person name="Silva D."/>
            <person name="Sinclair B."/>
            <person name="Sperling S."/>
            <person name="Stupka E."/>
            <person name="Sugiura K."/>
            <person name="Sultana R."/>
            <person name="Takenaka Y."/>
            <person name="Taki K."/>
            <person name="Tammoja K."/>
            <person name="Tan S.L."/>
            <person name="Tang S."/>
            <person name="Taylor M.S."/>
            <person name="Tegner J."/>
            <person name="Teichmann S.A."/>
            <person name="Ueda H.R."/>
            <person name="van Nimwegen E."/>
            <person name="Verardo R."/>
            <person name="Wei C.L."/>
            <person name="Yagi K."/>
            <person name="Yamanishi H."/>
            <person name="Zabarovsky E."/>
            <person name="Zhu S."/>
            <person name="Zimmer A."/>
            <person name="Hide W."/>
            <person name="Bult C."/>
            <person name="Grimmond S.M."/>
            <person name="Teasdale R.D."/>
            <person name="Liu E.T."/>
            <person name="Brusic V."/>
            <person name="Quackenbush J."/>
            <person name="Wahlestedt C."/>
            <person name="Mattick J.S."/>
            <person name="Hume D.A."/>
            <person name="Kai C."/>
            <person name="Sasaki D."/>
            <person name="Tomaru Y."/>
            <person name="Fukuda S."/>
            <person name="Kanamori-Katayama M."/>
            <person name="Suzuki M."/>
            <person name="Aoki J."/>
            <person name="Arakawa T."/>
            <person name="Iida J."/>
            <person name="Imamura K."/>
            <person name="Itoh M."/>
            <person name="Kato T."/>
            <person name="Kawaji H."/>
            <person name="Kawagashira N."/>
            <person name="Kawashima T."/>
            <person name="Kojima M."/>
            <person name="Kondo S."/>
            <person name="Konno H."/>
            <person name="Nakano K."/>
            <person name="Ninomiya N."/>
            <person name="Nishio T."/>
            <person name="Okada M."/>
            <person name="Plessy C."/>
            <person name="Shibata K."/>
            <person name="Shiraki T."/>
            <person name="Suzuki S."/>
            <person name="Tagami M."/>
            <person name="Waki K."/>
            <person name="Watahiki A."/>
            <person name="Okamura-Oho Y."/>
            <person name="Suzuki H."/>
            <person name="Kawai J."/>
            <person name="Hayashizaki Y."/>
        </authorList>
    </citation>
    <scope>NUCLEOTIDE SEQUENCE [LARGE SCALE MRNA] (ISOFORM 2)</scope>
    <source>
        <strain>C57BL/6J</strain>
        <tissue>Testis</tissue>
    </source>
</reference>
<reference key="4">
    <citation type="submission" date="2005-07" db="EMBL/GenBank/DDBJ databases">
        <authorList>
            <person name="Mural R.J."/>
            <person name="Adams M.D."/>
            <person name="Myers E.W."/>
            <person name="Smith H.O."/>
            <person name="Venter J.C."/>
        </authorList>
    </citation>
    <scope>NUCLEOTIDE SEQUENCE [LARGE SCALE GENOMIC DNA]</scope>
</reference>
<reference key="5">
    <citation type="journal article" date="2004" name="Genome Res.">
        <title>The status, quality, and expansion of the NIH full-length cDNA project: the Mammalian Gene Collection (MGC).</title>
        <authorList>
            <consortium name="The MGC Project Team"/>
        </authorList>
    </citation>
    <scope>NUCLEOTIDE SEQUENCE [LARGE SCALE MRNA] (ISOFORM 1)</scope>
</reference>
<reference key="6">
    <citation type="journal article" date="1993" name="Biochem. Biophys. Res. Commun.">
        <title>Presence of a serine protease in the complement-activating component of the complement-dependent bactericidal factor, RaRF, in mouse serum.</title>
        <authorList>
            <person name="Takahashi A."/>
            <person name="Takayama Y."/>
            <person name="Hatsuse H."/>
            <person name="Kawakami M."/>
        </authorList>
    </citation>
    <scope>NUCLEOTIDE SEQUENCE [MRNA] OF 465-704 (ISOFORM 1)</scope>
    <scope>PARTIAL PROTEIN SEQUENCE</scope>
    <source>
        <strain>BALB/cJ</strain>
        <tissue>Liver</tissue>
    </source>
</reference>
<reference key="7">
    <citation type="journal article" date="2008" name="J. Immunol.">
        <title>Mannose-binding lectin (MBL)-associated serine protease (MASP)-1 contributes to activation of the lectin complement pathway.</title>
        <authorList>
            <person name="Takahashi M."/>
            <person name="Iwaki D."/>
            <person name="Kanno K."/>
            <person name="Ishida Y."/>
            <person name="Xiong J."/>
            <person name="Matsushita M."/>
            <person name="Endo Y."/>
            <person name="Miura S."/>
            <person name="Ishii N."/>
            <person name="Sugamura K."/>
            <person name="Fujita T."/>
        </authorList>
    </citation>
    <scope>FUNCTION</scope>
    <scope>DISRUPTION PHENOTYPE</scope>
    <scope>TISSUE SPECIFICITY</scope>
</reference>
<reference key="8">
    <citation type="journal article" date="2010" name="Cell">
        <title>A tissue-specific atlas of mouse protein phosphorylation and expression.</title>
        <authorList>
            <person name="Huttlin E.L."/>
            <person name="Jedrychowski M.P."/>
            <person name="Elias J.E."/>
            <person name="Goswami T."/>
            <person name="Rad R."/>
            <person name="Beausoleil S.A."/>
            <person name="Villen J."/>
            <person name="Haas W."/>
            <person name="Sowa M.E."/>
            <person name="Gygi S.P."/>
        </authorList>
    </citation>
    <scope>IDENTIFICATION BY MASS SPECTROMETRY [LARGE SCALE ANALYSIS]</scope>
    <source>
        <tissue>Liver</tissue>
    </source>
</reference>
<accession>P98064</accession>
<accession>A2RRH8</accession>
<accession>A2RRH9</accession>
<accession>Q8CD27</accession>
<accession>Q8CIR8</accession>
<accession>Q920S0</accession>
<keyword id="KW-0025">Alternative splicing</keyword>
<keyword id="KW-0068">Autocatalytic cleavage</keyword>
<keyword id="KW-0106">Calcium</keyword>
<keyword id="KW-1018">Complement activation lectin pathway</keyword>
<keyword id="KW-0903">Direct protein sequencing</keyword>
<keyword id="KW-1015">Disulfide bond</keyword>
<keyword id="KW-0245">EGF-like domain</keyword>
<keyword id="KW-0325">Glycoprotein</keyword>
<keyword id="KW-0378">Hydrolase</keyword>
<keyword id="KW-0379">Hydroxylation</keyword>
<keyword id="KW-0391">Immunity</keyword>
<keyword id="KW-0399">Innate immunity</keyword>
<keyword id="KW-0479">Metal-binding</keyword>
<keyword id="KW-0645">Protease</keyword>
<keyword id="KW-1185">Reference proteome</keyword>
<keyword id="KW-0677">Repeat</keyword>
<keyword id="KW-0964">Secreted</keyword>
<keyword id="KW-0720">Serine protease</keyword>
<keyword id="KW-0732">Signal</keyword>
<keyword id="KW-0768">Sushi</keyword>
<name>MASP1_MOUSE</name>
<gene>
    <name type="primary">Masp1</name>
    <name type="synonym">Crarf</name>
    <name type="synonym">Masp3</name>
</gene>